<reference key="1">
    <citation type="journal article" date="2001" name="Nat. Genet.">
        <title>An abundance of X-linked genes expressed in spermatogonia.</title>
        <authorList>
            <person name="Wang P.J."/>
            <person name="McCarrey J.R."/>
            <person name="Yang F."/>
            <person name="Page D.C."/>
        </authorList>
    </citation>
    <scope>NUCLEOTIDE SEQUENCE [MRNA]</scope>
    <scope>TISSUE SPECIFICITY</scope>
    <scope>VARIANTS ARG-104; VAL-1035; SER-1311; VAL-1337 AND ARG-1439</scope>
    <source>
        <tissue>Testis</tissue>
    </source>
</reference>
<reference key="2">
    <citation type="journal article" date="2006" name="Nature">
        <title>DNA sequence and analysis of human chromosome 8.</title>
        <authorList>
            <person name="Nusbaum C."/>
            <person name="Mikkelsen T.S."/>
            <person name="Zody M.C."/>
            <person name="Asakawa S."/>
            <person name="Taudien S."/>
            <person name="Garber M."/>
            <person name="Kodira C.D."/>
            <person name="Schueler M.G."/>
            <person name="Shimizu A."/>
            <person name="Whittaker C.A."/>
            <person name="Chang J.L."/>
            <person name="Cuomo C.A."/>
            <person name="Dewar K."/>
            <person name="FitzGerald M.G."/>
            <person name="Yang X."/>
            <person name="Allen N.R."/>
            <person name="Anderson S."/>
            <person name="Asakawa T."/>
            <person name="Blechschmidt K."/>
            <person name="Bloom T."/>
            <person name="Borowsky M.L."/>
            <person name="Butler J."/>
            <person name="Cook A."/>
            <person name="Corum B."/>
            <person name="DeArellano K."/>
            <person name="DeCaprio D."/>
            <person name="Dooley K.T."/>
            <person name="Dorris L. III"/>
            <person name="Engels R."/>
            <person name="Gloeckner G."/>
            <person name="Hafez N."/>
            <person name="Hagopian D.S."/>
            <person name="Hall J.L."/>
            <person name="Ishikawa S.K."/>
            <person name="Jaffe D.B."/>
            <person name="Kamat A."/>
            <person name="Kudoh J."/>
            <person name="Lehmann R."/>
            <person name="Lokitsang T."/>
            <person name="Macdonald P."/>
            <person name="Major J.E."/>
            <person name="Matthews C.D."/>
            <person name="Mauceli E."/>
            <person name="Menzel U."/>
            <person name="Mihalev A.H."/>
            <person name="Minoshima S."/>
            <person name="Murayama Y."/>
            <person name="Naylor J.W."/>
            <person name="Nicol R."/>
            <person name="Nguyen C."/>
            <person name="O'Leary S.B."/>
            <person name="O'Neill K."/>
            <person name="Parker S.C.J."/>
            <person name="Polley A."/>
            <person name="Raymond C.K."/>
            <person name="Reichwald K."/>
            <person name="Rodriguez J."/>
            <person name="Sasaki T."/>
            <person name="Schilhabel M."/>
            <person name="Siddiqui R."/>
            <person name="Smith C.L."/>
            <person name="Sneddon T.P."/>
            <person name="Talamas J.A."/>
            <person name="Tenzin P."/>
            <person name="Topham K."/>
            <person name="Venkataraman V."/>
            <person name="Wen G."/>
            <person name="Yamazaki S."/>
            <person name="Young S.K."/>
            <person name="Zeng Q."/>
            <person name="Zimmer A.R."/>
            <person name="Rosenthal A."/>
            <person name="Birren B.W."/>
            <person name="Platzer M."/>
            <person name="Shimizu N."/>
            <person name="Lander E.S."/>
        </authorList>
    </citation>
    <scope>NUCLEOTIDE SEQUENCE [LARGE SCALE GENOMIC DNA]</scope>
</reference>
<reference key="3">
    <citation type="journal article" date="2003" name="Int. J. Cancer">
        <title>Five new human cancer-germline genes identified among 12 genes expressed in spermatogonia.</title>
        <authorList>
            <person name="Loriot A."/>
            <person name="Boon T."/>
            <person name="De Smet C."/>
        </authorList>
    </citation>
    <scope>TISSUE SPECIFICITY</scope>
    <scope>IDENTIFICATION AS A CANCER/TESTIS ANTIGEN</scope>
</reference>
<reference key="4">
    <citation type="journal article" date="2015" name="Hum. Mol. Genet.">
        <title>Exome sequencing reveals a nonsense mutation in TEX15 causing spermatogenic failure in a Turkish family.</title>
        <authorList>
            <person name="Okutman O."/>
            <person name="Muller J."/>
            <person name="Baert Y."/>
            <person name="Serdarogullari M."/>
            <person name="Gultomruk M."/>
            <person name="Piton A."/>
            <person name="Rombaut C."/>
            <person name="Benkhalifa M."/>
            <person name="Teletin M."/>
            <person name="Skory V."/>
            <person name="Bakircioglu E."/>
            <person name="Goossens E."/>
            <person name="Bahceci M."/>
            <person name="Viville S."/>
        </authorList>
    </citation>
    <scope>INVOLVEMENT IN SPGF25</scope>
    <scope>VARIANT SPGF25 710-TYR--HIS-2789 DEL</scope>
    <scope>TISSUE SPECIFICITY</scope>
</reference>
<reference key="5">
    <citation type="journal article" date="2017" name="Gynecol. Obstet. Invest.">
        <title>Two novel TEX15 mutations in a family with nonobstructive azoospermia.</title>
        <authorList>
            <person name="Colombo R."/>
            <person name="Pontoglio A."/>
            <person name="Bini M."/>
        </authorList>
    </citation>
    <scope>INVOLVEMENT IN SPGF25</scope>
    <scope>VARIANT SPGF25 807-LYS--HIS-2789 DEL</scope>
</reference>
<reference key="6">
    <citation type="journal article" date="2018" name="Asian J. Androl.">
        <title>Case study of a patient with cryptozoospermia associated with a recessive TEX15 nonsense mutation.</title>
        <authorList>
            <person name="Wang X."/>
            <person name="Jin H.R."/>
            <person name="Cui Y.Q."/>
            <person name="Chen J."/>
            <person name="Sha Y.W."/>
            <person name="Gao Z.L."/>
        </authorList>
    </citation>
    <scope>INVOLVEMENT IN SPGF25</scope>
    <scope>VARIANT SPGF25 2312-ARG--HIS-2789 DEL</scope>
</reference>
<proteinExistence type="evidence at protein level"/>
<gene>
    <name type="primary">TEX15</name>
</gene>
<dbReference type="EMBL" id="AF285605">
    <property type="protein sequence ID" value="AAK31984.1"/>
    <property type="molecule type" value="mRNA"/>
</dbReference>
<dbReference type="EMBL" id="AC009314">
    <property type="status" value="NOT_ANNOTATED_CDS"/>
    <property type="molecule type" value="Genomic_DNA"/>
</dbReference>
<dbReference type="EMBL" id="AC090281">
    <property type="status" value="NOT_ANNOTATED_CDS"/>
    <property type="molecule type" value="Genomic_DNA"/>
</dbReference>
<dbReference type="RefSeq" id="NP_112561.2">
    <property type="nucleotide sequence ID" value="NM_031271.3"/>
</dbReference>
<dbReference type="BioGRID" id="121088">
    <property type="interactions" value="24"/>
</dbReference>
<dbReference type="FunCoup" id="Q9BXT5">
    <property type="interactions" value="630"/>
</dbReference>
<dbReference type="IntAct" id="Q9BXT5">
    <property type="interactions" value="14"/>
</dbReference>
<dbReference type="MINT" id="Q9BXT5"/>
<dbReference type="STRING" id="9606.ENSP00000493555"/>
<dbReference type="CarbonylDB" id="Q9BXT5"/>
<dbReference type="GlyGen" id="Q9BXT5">
    <property type="glycosylation" value="4 sites, 1 O-linked glycan (4 sites)"/>
</dbReference>
<dbReference type="iPTMnet" id="Q9BXT5"/>
<dbReference type="PhosphoSitePlus" id="Q9BXT5"/>
<dbReference type="BioMuta" id="TEX15"/>
<dbReference type="DMDM" id="308153507"/>
<dbReference type="jPOST" id="Q9BXT5"/>
<dbReference type="MassIVE" id="Q9BXT5"/>
<dbReference type="PaxDb" id="9606-ENSP00000256246"/>
<dbReference type="PeptideAtlas" id="Q9BXT5"/>
<dbReference type="ProteomicsDB" id="79507"/>
<dbReference type="Pumba" id="Q9BXT5"/>
<dbReference type="Antibodypedia" id="51904">
    <property type="antibodies" value="17 antibodies from 10 providers"/>
</dbReference>
<dbReference type="Ensembl" id="ENST00000256246.5">
    <property type="protein sequence ID" value="ENSP00000256246.2"/>
    <property type="gene ID" value="ENSG00000133863.9"/>
</dbReference>
<dbReference type="UCSC" id="uc003xil.4">
    <property type="organism name" value="human"/>
</dbReference>
<dbReference type="AGR" id="HGNC:11738"/>
<dbReference type="GeneCards" id="TEX15"/>
<dbReference type="HGNC" id="HGNC:11738">
    <property type="gene designation" value="TEX15"/>
</dbReference>
<dbReference type="HPA" id="ENSG00000133863">
    <property type="expression patterns" value="Group enriched (endometrium, smooth muscle, testis)"/>
</dbReference>
<dbReference type="MalaCards" id="TEX15"/>
<dbReference type="MIM" id="605795">
    <property type="type" value="gene"/>
</dbReference>
<dbReference type="MIM" id="617960">
    <property type="type" value="phenotype"/>
</dbReference>
<dbReference type="neXtProt" id="NX_Q9BXT5"/>
<dbReference type="OpenTargets" id="ENSG00000133863"/>
<dbReference type="Orphanet" id="399805">
    <property type="disease" value="Male infertility with azoospermia or oligozoospermia due to single gene mutation"/>
</dbReference>
<dbReference type="PharmGKB" id="PA36455"/>
<dbReference type="VEuPathDB" id="HostDB:ENSG00000133863"/>
<dbReference type="eggNOG" id="ENOG502QW6W">
    <property type="taxonomic scope" value="Eukaryota"/>
</dbReference>
<dbReference type="GeneTree" id="ENSGT00390000006260"/>
<dbReference type="HOGENOM" id="CLU_000620_0_0_1"/>
<dbReference type="InParanoid" id="Q9BXT5"/>
<dbReference type="OrthoDB" id="10054471at2759"/>
<dbReference type="PAN-GO" id="Q9BXT5">
    <property type="GO annotations" value="4 GO annotations based on evolutionary models"/>
</dbReference>
<dbReference type="PhylomeDB" id="Q9BXT5"/>
<dbReference type="TreeFam" id="TF332375"/>
<dbReference type="PathwayCommons" id="Q9BXT5"/>
<dbReference type="Reactome" id="R-HSA-912446">
    <property type="pathway name" value="Meiotic recombination"/>
</dbReference>
<dbReference type="SignaLink" id="Q9BXT5"/>
<dbReference type="BioGRID-ORCS" id="56154">
    <property type="hits" value="10 hits in 1157 CRISPR screens"/>
</dbReference>
<dbReference type="ChiTaRS" id="TEX15">
    <property type="organism name" value="human"/>
</dbReference>
<dbReference type="GenomeRNAi" id="56154"/>
<dbReference type="Pharos" id="Q9BXT5">
    <property type="development level" value="Tbio"/>
</dbReference>
<dbReference type="PRO" id="PR:Q9BXT5"/>
<dbReference type="Proteomes" id="UP000005640">
    <property type="component" value="Chromosome 8"/>
</dbReference>
<dbReference type="RNAct" id="Q9BXT5">
    <property type="molecule type" value="protein"/>
</dbReference>
<dbReference type="Bgee" id="ENSG00000133863">
    <property type="expression patterns" value="Expressed in male germ line stem cell (sensu Vertebrata) in testis and 61 other cell types or tissues"/>
</dbReference>
<dbReference type="ExpressionAtlas" id="Q9BXT5">
    <property type="expression patterns" value="baseline and differential"/>
</dbReference>
<dbReference type="GO" id="GO:0005737">
    <property type="term" value="C:cytoplasm"/>
    <property type="evidence" value="ECO:0000250"/>
    <property type="project" value="UniProtKB"/>
</dbReference>
<dbReference type="GO" id="GO:0005634">
    <property type="term" value="C:nucleus"/>
    <property type="evidence" value="ECO:0000250"/>
    <property type="project" value="UniProtKB"/>
</dbReference>
<dbReference type="GO" id="GO:0030154">
    <property type="term" value="P:cell differentiation"/>
    <property type="evidence" value="ECO:0007669"/>
    <property type="project" value="UniProtKB-KW"/>
</dbReference>
<dbReference type="GO" id="GO:0006346">
    <property type="term" value="P:DNA methylation-dependent constitutive heterochromatin formation"/>
    <property type="evidence" value="ECO:0000250"/>
    <property type="project" value="UniProtKB"/>
</dbReference>
<dbReference type="GO" id="GO:0006281">
    <property type="term" value="P:DNA repair"/>
    <property type="evidence" value="ECO:0007669"/>
    <property type="project" value="UniProtKB-KW"/>
</dbReference>
<dbReference type="GO" id="GO:0007140">
    <property type="term" value="P:male meiotic nuclear division"/>
    <property type="evidence" value="ECO:0000318"/>
    <property type="project" value="GO_Central"/>
</dbReference>
<dbReference type="GO" id="GO:0010569">
    <property type="term" value="P:regulation of double-strand break repair via homologous recombination"/>
    <property type="evidence" value="ECO:0000318"/>
    <property type="project" value="GO_Central"/>
</dbReference>
<dbReference type="GO" id="GO:0031047">
    <property type="term" value="P:regulatory ncRNA-mediated gene silencing"/>
    <property type="evidence" value="ECO:0007669"/>
    <property type="project" value="UniProtKB-KW"/>
</dbReference>
<dbReference type="GO" id="GO:0007283">
    <property type="term" value="P:spermatogenesis"/>
    <property type="evidence" value="ECO:0007669"/>
    <property type="project" value="UniProtKB-KW"/>
</dbReference>
<dbReference type="GO" id="GO:0007130">
    <property type="term" value="P:synaptonemal complex assembly"/>
    <property type="evidence" value="ECO:0000318"/>
    <property type="project" value="GO_Central"/>
</dbReference>
<dbReference type="GO" id="GO:0010526">
    <property type="term" value="P:transposable element silencing"/>
    <property type="evidence" value="ECO:0000250"/>
    <property type="project" value="UniProtKB"/>
</dbReference>
<dbReference type="InterPro" id="IPR026616">
    <property type="entry name" value="TEX15"/>
</dbReference>
<dbReference type="InterPro" id="IPR032765">
    <property type="entry name" value="TEX15_dom"/>
</dbReference>
<dbReference type="PANTHER" id="PTHR22380">
    <property type="entry name" value="TESTIS-EXPRESSED PROTEIN 15"/>
    <property type="match status" value="1"/>
</dbReference>
<dbReference type="PANTHER" id="PTHR22380:SF1">
    <property type="entry name" value="TESTIS-EXPRESSED PROTEIN 15"/>
    <property type="match status" value="1"/>
</dbReference>
<dbReference type="Pfam" id="PF15326">
    <property type="entry name" value="TEX15"/>
    <property type="match status" value="2"/>
</dbReference>
<name>TEX15_HUMAN</name>
<comment type="function">
    <text evidence="1">Required during spermatogenesis for normal chromosome synapsis and meiotic recombination in germ cells. Necessary for formation of DMC1 and RAD51 foci on meiotic chromosomes, suggesting a specific role in DNA double-stranded break repair (By similarity). Essential executor of PIWIL4-piRNA pathway directed transposon DNA methylation and silencing in the male embryonic germ cells (By similarity). PIWIL4-piRNA binds to nascent transposon transcripts and interacts with TEX15, which may in turn recruit the epigenetic silencing machinery to the transposon loci (By similarity). Not required for piRNA biosynthesis (By similarity).</text>
</comment>
<comment type="subunit">
    <text evidence="1">Interacts with PIWIL4 and PIWIL2.</text>
</comment>
<comment type="subcellular location">
    <subcellularLocation>
        <location evidence="1">Cytoplasm</location>
    </subcellularLocation>
    <subcellularLocation>
        <location evidence="1">Nucleus</location>
    </subcellularLocation>
</comment>
<comment type="tissue specificity">
    <text evidence="3 4 5">Expressed in testis, predominantly in germ cells (PubMed:11279525, PubMed:26199321). Low expression, if any, in ovary (PubMed:11279525, PubMed:26199321). Also expressed in several cancers (PubMed:12704671).</text>
</comment>
<comment type="disease" evidence="5 6 7">
    <disease id="DI-05242">
        <name>Spermatogenic failure 25</name>
        <acronym>SPGF25</acronym>
        <description>An autosomal recessive infertility disorder caused by spermatogenesis defects that result in severe oligozoospermia or azoospermia.</description>
        <dbReference type="MIM" id="617960"/>
    </disease>
    <text>The disease is caused by variants affecting the gene represented in this entry.</text>
</comment>
<comment type="similarity">
    <text evidence="8">Belongs to the TEX15 family.</text>
</comment>
<organism>
    <name type="scientific">Homo sapiens</name>
    <name type="common">Human</name>
    <dbReference type="NCBI Taxonomy" id="9606"/>
    <lineage>
        <taxon>Eukaryota</taxon>
        <taxon>Metazoa</taxon>
        <taxon>Chordata</taxon>
        <taxon>Craniata</taxon>
        <taxon>Vertebrata</taxon>
        <taxon>Euteleostomi</taxon>
        <taxon>Mammalia</taxon>
        <taxon>Eutheria</taxon>
        <taxon>Euarchontoglires</taxon>
        <taxon>Primates</taxon>
        <taxon>Haplorrhini</taxon>
        <taxon>Catarrhini</taxon>
        <taxon>Hominidae</taxon>
        <taxon>Homo</taxon>
    </lineage>
</organism>
<keyword id="KW-0963">Cytoplasm</keyword>
<keyword id="KW-0221">Differentiation</keyword>
<keyword id="KW-0225">Disease variant</keyword>
<keyword id="KW-0227">DNA damage</keyword>
<keyword id="KW-0234">DNA repair</keyword>
<keyword id="KW-0469">Meiosis</keyword>
<keyword id="KW-0539">Nucleus</keyword>
<keyword id="KW-1267">Proteomics identification</keyword>
<keyword id="KW-1185">Reference proteome</keyword>
<keyword id="KW-0943">RNA-mediated gene silencing</keyword>
<keyword id="KW-0744">Spermatogenesis</keyword>
<feature type="chain" id="PRO_0000244483" description="Testis-expressed protein 15">
    <location>
        <begin position="1"/>
        <end position="2789"/>
    </location>
</feature>
<feature type="region of interest" description="Disordered" evidence="2">
    <location>
        <begin position="34"/>
        <end position="99"/>
    </location>
</feature>
<feature type="region of interest" description="Disordered" evidence="2">
    <location>
        <begin position="169"/>
        <end position="191"/>
    </location>
</feature>
<feature type="region of interest" description="Disordered" evidence="2">
    <location>
        <begin position="1063"/>
        <end position="1166"/>
    </location>
</feature>
<feature type="region of interest" description="Disordered" evidence="2">
    <location>
        <begin position="2303"/>
        <end position="2331"/>
    </location>
</feature>
<feature type="region of interest" description="Disordered" evidence="2">
    <location>
        <begin position="2351"/>
        <end position="2379"/>
    </location>
</feature>
<feature type="compositionally biased region" description="Polar residues" evidence="2">
    <location>
        <begin position="34"/>
        <end position="46"/>
    </location>
</feature>
<feature type="compositionally biased region" description="Basic and acidic residues" evidence="2">
    <location>
        <begin position="47"/>
        <end position="59"/>
    </location>
</feature>
<feature type="compositionally biased region" description="Polar residues" evidence="2">
    <location>
        <begin position="80"/>
        <end position="98"/>
    </location>
</feature>
<feature type="compositionally biased region" description="Basic and acidic residues" evidence="2">
    <location>
        <begin position="170"/>
        <end position="179"/>
    </location>
</feature>
<feature type="compositionally biased region" description="Basic residues" evidence="2">
    <location>
        <begin position="1063"/>
        <end position="1077"/>
    </location>
</feature>
<feature type="compositionally biased region" description="Low complexity" evidence="2">
    <location>
        <begin position="1106"/>
        <end position="1116"/>
    </location>
</feature>
<feature type="compositionally biased region" description="Low complexity" evidence="2">
    <location>
        <begin position="1134"/>
        <end position="1160"/>
    </location>
</feature>
<feature type="sequence variant" id="VAR_060394" description="In dbSNP:rs323347." evidence="3">
    <original>C</original>
    <variation>R</variation>
    <location>
        <position position="104"/>
    </location>
</feature>
<feature type="sequence variant" id="VAR_060395" description="In dbSNP:rs9297162.">
    <original>P</original>
    <variation>L</variation>
    <location>
        <position position="383"/>
    </location>
</feature>
<feature type="sequence variant" id="VAR_080904" description="In SPGF25; dbSNP:rs864309485." evidence="5">
    <location>
        <begin position="710"/>
        <end position="2789"/>
    </location>
</feature>
<feature type="sequence variant" id="VAR_080905" description="In SPGF25." evidence="7">
    <location>
        <begin position="807"/>
        <end position="2789"/>
    </location>
</feature>
<feature type="sequence variant" id="VAR_060396" description="In dbSNP:rs323346." evidence="3">
    <original>I</original>
    <variation>V</variation>
    <location>
        <position position="1035"/>
    </location>
</feature>
<feature type="sequence variant" id="VAR_060397" description="In dbSNP:rs323345." evidence="3">
    <original>N</original>
    <variation>S</variation>
    <location>
        <position position="1311"/>
    </location>
</feature>
<feature type="sequence variant" id="VAR_060398" description="In dbSNP:rs323344." evidence="3">
    <original>L</original>
    <variation>V</variation>
    <location>
        <position position="1337"/>
    </location>
</feature>
<feature type="sequence variant" id="VAR_060399" description="In dbSNP:rs323343." evidence="3">
    <original>K</original>
    <variation>R</variation>
    <location>
        <position position="1439"/>
    </location>
</feature>
<feature type="sequence variant" id="VAR_061711" description="In dbSNP:rs60474250.">
    <original>D</original>
    <variation>N</variation>
    <location>
        <position position="2138"/>
    </location>
</feature>
<feature type="sequence variant" id="VAR_080906" description="In SPGF25; uncertain significance; dbSNP:rs763654373." evidence="6">
    <location>
        <begin position="2312"/>
        <end position="2789"/>
    </location>
</feature>
<protein>
    <recommendedName>
        <fullName>Testis-expressed protein 15</fullName>
    </recommendedName>
    <alternativeName>
        <fullName>Cancer/testis antigen 42</fullName>
        <shortName>CT42</shortName>
    </alternativeName>
</protein>
<accession>Q9BXT5</accession>
<evidence type="ECO:0000250" key="1">
    <source>
        <dbReference type="UniProtKB" id="F8VPN2"/>
    </source>
</evidence>
<evidence type="ECO:0000256" key="2">
    <source>
        <dbReference type="SAM" id="MobiDB-lite"/>
    </source>
</evidence>
<evidence type="ECO:0000269" key="3">
    <source>
    </source>
</evidence>
<evidence type="ECO:0000269" key="4">
    <source>
    </source>
</evidence>
<evidence type="ECO:0000269" key="5">
    <source>
    </source>
</evidence>
<evidence type="ECO:0000269" key="6">
    <source>
    </source>
</evidence>
<evidence type="ECO:0000269" key="7">
    <source>
    </source>
</evidence>
<evidence type="ECO:0000305" key="8"/>
<sequence>MPSDAKDSVNGDLLLNWTSLKNILSGLNASFPLHNNTGSSTVTTSKSIKDPRLMRREESMGEQSSTAGLNEVLQFEKSSDNVNSEIKSTPSNSASSSEVVPGDCAVLTNGLDTPCFKTSVNDSQSWAHNMGSEDYDCIPPNKVTMAGQCKDQGNFSFPISVSNVVSEVENQNHSEEKAQRAQQESGNAYTKEYSSHIFQDSQSSDLKTIYQTGCQTSTVFPLKKKVSIDEYLQNTGKMKNFADLEDSSKHEEKQTSWKEIDNDFTNETKISPIDNYIVLHQEYKESESHNSFGKSCDKILITQELEITKSSTSTIKDKDELDHLALEWQITPSFESLSQKHPQHSVEYEGNIHTSLAIAQKLMELKLGKINQNYASIITEAFPKPKDIPQAKEMFIDTVISSYNIETAHDSSNCSITREHICVHRKNENEPVSLENIQRDYKETAYVEDRGQDHNLFCNSQLSNDIWLNVNFKKQTDRENQNEAKENSASCVENNIENIYGDKKQDSHTNENFSNIDEKEDKNYHNIEILSSEEFSTKFNLICREDNAVSAATALLESEEDTISAVKQKDTENTGRSVEHLASTTFPKTASSSVCVASNAAIQIASATMPALSLNNDDHQIYQFKETCSSESPDFGLLVKHRVSDCEIDTDKNKSQESFHQSINENLVLQSIELESEIEIELEDCDDAFIFQQDTHSHENMLCEEFVTSYKALKSRISWEGLLALDNGEMEVLESTTGRENSDQHYSKESNYFYSSTQNNETELTSPILLPDLQIKITNIFRPGFSPTADSLALKDSFCTHVTEATKPEINKEDGEILGFDIYSQPFGENADYPCEDKVDNIRQESGPVSNSEISLSFDLSRNTDVNHTSENQNSESLFTEPSNVTTIDDGSRCFFTKSKTDYNDTKNKKEVESRISKRKLHISSRDQNIPHKDLRRHKIYGRKRRLTSQDSSECFSSLSQGRIKTFSQSEKHIKSVLNILSDEASLCKSKCLSRKLDKAVVHLKKAHRRVHTSLQLITKVGEERKGPLPKSYAIICNNFWESCDLQGYSSVSQRKYYSTKHFSSKRKYDKRRKKRAPKADISKSLTHVSKHKSYKTSGEKKCLSRKSMASSVSKSHPTTSHMGEFCNQEHPESQLPVSSTSQSTSQSVYYNSSVSNPSLSEEHQPFSGKTAYLFSPDHSDEKLIEKENQIDTAFLSSTSKYEKLEKHSANHNVKDATKENSCDANEVINESNSVSLSCIKENINSSTGNDCDATCIGHTKAKTDVLISVLDSNVKHFLNDLYQQGNLILSDCKRNLEVKWTDPIERPKQNIITGNFLMGPLNLTLIASKKYSIPQLSAAAVTDSEGESSKSYLDKQRILTVDSFAASSTVPHCEQSCREKELLKTEQCSSGNCLHTDGNETNVTENYELDVASGTEEDKSYGENIVELSSSDSSLLLKDNVKGSSSETCIVKKDTEDRITWKVKQAEKAKDSVYKRSMTEGSTVNTEYKNQKNQISEESCLNEKIITTNLIDSHLSTKNTTTESVPLKNTVSNPLNKREKKGEIKVSKDSQSDLTLHSEIAYISKPGILGVNHTPILPAHSETCKVPTLLKKPASYVSDFKEKHCSANHTALIANLSQILQRADEASSLQILQEETKVCLNILPLFVEAFERKQECSVEQILISRELLVDQNLWNNCKHTLKPCAVDTLVELQMMMETIQFIENKKRHLEGEPTLRSLLWYDETLYAELLGKPRGFQQQSNFYPGFQGRLKYNAFCELQTYHDQLVELLEETKREKNSYYVFLKYKRQVNECEAIMEHCSDCFDFSLSVPFTCGVNFGDSLEDLEILRKSTLKLINVCGDSPKVHSYPGKQDHLWIIIEMISSKVNFIKNNEAVRVKISLYGLEHIFFDAAKNLVWKERTQSFSKKYSQKKDEERLLRVNKCAFSKLQKIYDTLSKDLNNEPISPIGLEEDTIIASRKSDHPINEATISIENSKFNSNLLAHPDICCISEILDQAEFADLKKLQDLTLRCTDHLEILKKYFQMLQDNNMDNIFITEENVLDVVINHSHEAIILKPEAIEMYIEIVMVSETIHFLKNSIAKKLDKQRFRGMLWFDLSLLPELVQCQEKMASFSFLKDNSTDVCLWKVIETAVSELKKDLDIICKYNEAVNCSYAIHLLSRELQELSEIKKLLKKSKYFISTYIDFVPYIASINYGSTVTELEYNYNQFSTLLKNVMSAPRKDLGKMAHIRKVMKTIEHMKMICTKNAELTISFFLCQMLYNRRKILQLKRKEKMNIHIVKPGENNNKFSISTMLPPVSECINKNISNSSKKRPSTVDKCEDSQEQQQDTTVSSCKKLKVDMKDVTKINREKATFKHPRTTGSHPKSENKIVPSSCDSLKRNHLTPKKVEMQRSLPGSLLPLENPKDTCASKSESKIDLTVSSDHFSGQQENLNSMKKRNVNFSAAETKSDKKDCAAFAICDQKSVHGTFSPDHGTLLQKFLKNSPDPTQKSCLSDINPETDVSLVPDASVLSKPIFCFVKDVHPDLEMNDTVFELQDNDIVNSSIKNSSCMTSPEPICIQNKIPTLQINKLQPTETESEDKYMKDTLNPNTVHTFGASGHITLNVNQGAEYSLSEQQNDKNSKVLMQNAATYWNELPQSACNPTYNSSEHLFGTSYPYSAWCVYQYSNSNGNAITQTYQGITSYEVQPSPSGLLTTVASTAQGTHSNLLYSQYFTYFAGEPQANGFVPVNGYFQSQIPASNFRQPIFSQYASHQPLPQATYPYLPNRFVPPEVPWVYAPWHQESFHPGH</sequence>